<comment type="subcellular location">
    <subcellularLocation>
        <location>Cytoplasm</location>
    </subcellularLocation>
    <subcellularLocation>
        <location evidence="1">Cell inner membrane</location>
        <topology evidence="1">Peripheral membrane protein</topology>
        <orientation evidence="1">Cytoplasmic side</orientation>
    </subcellularLocation>
</comment>
<comment type="similarity">
    <text evidence="1">Belongs to the HflD family.</text>
</comment>
<reference key="1">
    <citation type="submission" date="2007-06" db="EMBL/GenBank/DDBJ databases">
        <title>Complete sequence of Marinomonas sp. MWYL1.</title>
        <authorList>
            <consortium name="US DOE Joint Genome Institute"/>
            <person name="Copeland A."/>
            <person name="Lucas S."/>
            <person name="Lapidus A."/>
            <person name="Barry K."/>
            <person name="Glavina del Rio T."/>
            <person name="Dalin E."/>
            <person name="Tice H."/>
            <person name="Pitluck S."/>
            <person name="Kiss H."/>
            <person name="Brettin T."/>
            <person name="Bruce D."/>
            <person name="Detter J.C."/>
            <person name="Han C."/>
            <person name="Schmutz J."/>
            <person name="Larimer F."/>
            <person name="Land M."/>
            <person name="Hauser L."/>
            <person name="Kyrpides N."/>
            <person name="Kim E."/>
            <person name="Johnston A.W.B."/>
            <person name="Todd J.D."/>
            <person name="Rogers R."/>
            <person name="Wexler M."/>
            <person name="Bond P.L."/>
            <person name="Li Y."/>
            <person name="Richardson P."/>
        </authorList>
    </citation>
    <scope>NUCLEOTIDE SEQUENCE [LARGE SCALE GENOMIC DNA]</scope>
    <source>
        <strain>MWYL1</strain>
    </source>
</reference>
<feature type="chain" id="PRO_0000390641" description="High frequency lysogenization protein HflD homolog">
    <location>
        <begin position="1"/>
        <end position="209"/>
    </location>
</feature>
<name>HFLD_MARMS</name>
<protein>
    <recommendedName>
        <fullName evidence="1">High frequency lysogenization protein HflD homolog</fullName>
    </recommendedName>
</protein>
<accession>A6W0E2</accession>
<evidence type="ECO:0000255" key="1">
    <source>
        <dbReference type="HAMAP-Rule" id="MF_00695"/>
    </source>
</evidence>
<gene>
    <name evidence="1" type="primary">hflD</name>
    <name type="ordered locus">Mmwyl1_3266</name>
</gene>
<sequence>MSSREKEQTIALSAIFQAAELVSILAKTGQVDNASLQPLLESLLMVNAASTEDIYGGQWDYSTNLALGRKISRQALGKERSSVNPDTLRYALSLIHLENKLSKTPEMLSTIGQKIAQIEQKKAHYESVLHENMVASISGMYQDTLSKLSFRIQVHGDSRFLQQPQVANQVRAILMSGIRAAMLWRQLGGKRWHLIFKRKALLSALESRN</sequence>
<organism>
    <name type="scientific">Marinomonas sp. (strain MWYL1)</name>
    <dbReference type="NCBI Taxonomy" id="400668"/>
    <lineage>
        <taxon>Bacteria</taxon>
        <taxon>Pseudomonadati</taxon>
        <taxon>Pseudomonadota</taxon>
        <taxon>Gammaproteobacteria</taxon>
        <taxon>Oceanospirillales</taxon>
        <taxon>Oceanospirillaceae</taxon>
        <taxon>Marinomonas</taxon>
    </lineage>
</organism>
<dbReference type="EMBL" id="CP000749">
    <property type="protein sequence ID" value="ABR72171.1"/>
    <property type="molecule type" value="Genomic_DNA"/>
</dbReference>
<dbReference type="SMR" id="A6W0E2"/>
<dbReference type="STRING" id="400668.Mmwyl1_3266"/>
<dbReference type="KEGG" id="mmw:Mmwyl1_3266"/>
<dbReference type="eggNOG" id="COG2915">
    <property type="taxonomic scope" value="Bacteria"/>
</dbReference>
<dbReference type="HOGENOM" id="CLU_098920_0_0_6"/>
<dbReference type="OrthoDB" id="9788031at2"/>
<dbReference type="GO" id="GO:0005737">
    <property type="term" value="C:cytoplasm"/>
    <property type="evidence" value="ECO:0007669"/>
    <property type="project" value="UniProtKB-SubCell"/>
</dbReference>
<dbReference type="GO" id="GO:0005886">
    <property type="term" value="C:plasma membrane"/>
    <property type="evidence" value="ECO:0007669"/>
    <property type="project" value="UniProtKB-SubCell"/>
</dbReference>
<dbReference type="Gene3D" id="1.10.3890.10">
    <property type="entry name" value="HflD-like"/>
    <property type="match status" value="1"/>
</dbReference>
<dbReference type="HAMAP" id="MF_00695">
    <property type="entry name" value="HflD_protein"/>
    <property type="match status" value="1"/>
</dbReference>
<dbReference type="InterPro" id="IPR007451">
    <property type="entry name" value="HflD"/>
</dbReference>
<dbReference type="InterPro" id="IPR035932">
    <property type="entry name" value="HflD-like_sf"/>
</dbReference>
<dbReference type="NCBIfam" id="NF001246">
    <property type="entry name" value="PRK00218.1-2"/>
    <property type="match status" value="1"/>
</dbReference>
<dbReference type="PANTHER" id="PTHR38100">
    <property type="entry name" value="HIGH FREQUENCY LYSOGENIZATION PROTEIN HFLD"/>
    <property type="match status" value="1"/>
</dbReference>
<dbReference type="PANTHER" id="PTHR38100:SF1">
    <property type="entry name" value="HIGH FREQUENCY LYSOGENIZATION PROTEIN HFLD"/>
    <property type="match status" value="1"/>
</dbReference>
<dbReference type="Pfam" id="PF04356">
    <property type="entry name" value="DUF489"/>
    <property type="match status" value="1"/>
</dbReference>
<dbReference type="SUPFAM" id="SSF101322">
    <property type="entry name" value="YcfC-like"/>
    <property type="match status" value="1"/>
</dbReference>
<keyword id="KW-0997">Cell inner membrane</keyword>
<keyword id="KW-1003">Cell membrane</keyword>
<keyword id="KW-0963">Cytoplasm</keyword>
<keyword id="KW-0472">Membrane</keyword>
<proteinExistence type="inferred from homology"/>